<accession>Q04573</accession>
<accession>Q61993</accession>
<name>NPY1R_MOUSE</name>
<dbReference type="EMBL" id="Z18280">
    <property type="protein sequence ID" value="CAA79157.1"/>
    <property type="molecule type" value="Genomic_DNA"/>
</dbReference>
<dbReference type="EMBL" id="Z18281">
    <property type="status" value="NOT_ANNOTATED_CDS"/>
    <property type="molecule type" value="Genomic_DNA"/>
</dbReference>
<dbReference type="EMBL" id="D63818">
    <property type="protein sequence ID" value="BAA09887.1"/>
    <property type="molecule type" value="mRNA"/>
</dbReference>
<dbReference type="EMBL" id="D63819">
    <property type="protein sequence ID" value="BAA09888.1"/>
    <property type="molecule type" value="mRNA"/>
</dbReference>
<dbReference type="EMBL" id="BC051420">
    <property type="protein sequence ID" value="AAH51420.1"/>
    <property type="molecule type" value="mRNA"/>
</dbReference>
<dbReference type="CCDS" id="CCDS22336.1">
    <molecule id="Q04573-1"/>
</dbReference>
<dbReference type="PIR" id="S27388">
    <property type="entry name" value="S27388"/>
</dbReference>
<dbReference type="RefSeq" id="NP_001345884.1">
    <molecule id="Q04573-1"/>
    <property type="nucleotide sequence ID" value="NM_001358955.1"/>
</dbReference>
<dbReference type="RefSeq" id="NP_035064.1">
    <molecule id="Q04573-1"/>
    <property type="nucleotide sequence ID" value="NM_010934.4"/>
</dbReference>
<dbReference type="RefSeq" id="XP_006509657.1">
    <molecule id="Q04573-1"/>
    <property type="nucleotide sequence ID" value="XM_006509594.5"/>
</dbReference>
<dbReference type="RefSeq" id="XP_006509658.1">
    <molecule id="Q04573-1"/>
    <property type="nucleotide sequence ID" value="XM_006509595.5"/>
</dbReference>
<dbReference type="RefSeq" id="XP_006509659.1">
    <property type="nucleotide sequence ID" value="XM_006509596.3"/>
</dbReference>
<dbReference type="RefSeq" id="XP_017168103.1">
    <property type="nucleotide sequence ID" value="XM_017312614.1"/>
</dbReference>
<dbReference type="RefSeq" id="XP_036009704.1">
    <molecule id="Q04573-1"/>
    <property type="nucleotide sequence ID" value="XM_036153811.1"/>
</dbReference>
<dbReference type="RefSeq" id="XP_036009705.1">
    <molecule id="Q04573-1"/>
    <property type="nucleotide sequence ID" value="XM_036153812.1"/>
</dbReference>
<dbReference type="SMR" id="Q04573"/>
<dbReference type="CORUM" id="Q04573"/>
<dbReference type="FunCoup" id="Q04573">
    <property type="interactions" value="760"/>
</dbReference>
<dbReference type="STRING" id="10090.ENSMUSP00000045530"/>
<dbReference type="BindingDB" id="Q04573"/>
<dbReference type="ChEMBL" id="CHEMBL4739851"/>
<dbReference type="GuidetoPHARMACOLOGY" id="305"/>
<dbReference type="GlyCosmos" id="Q04573">
    <property type="glycosylation" value="3 sites, No reported glycans"/>
</dbReference>
<dbReference type="GlyGen" id="Q04573">
    <property type="glycosylation" value="3 sites, 1 N-linked glycan (1 site)"/>
</dbReference>
<dbReference type="iPTMnet" id="Q04573"/>
<dbReference type="PhosphoSitePlus" id="Q04573"/>
<dbReference type="PaxDb" id="10090-ENSMUSP00000045530"/>
<dbReference type="ProteomicsDB" id="293883">
    <molecule id="Q04573-1"/>
</dbReference>
<dbReference type="Antibodypedia" id="16963">
    <property type="antibodies" value="440 antibodies from 37 providers"/>
</dbReference>
<dbReference type="DNASU" id="18166"/>
<dbReference type="Ensembl" id="ENSMUST00000039303.7">
    <molecule id="Q04573-1"/>
    <property type="protein sequence ID" value="ENSMUSP00000045530.6"/>
    <property type="gene ID" value="ENSMUSG00000036437.7"/>
</dbReference>
<dbReference type="Ensembl" id="ENSMUST00000212588.2">
    <molecule id="Q04573-1"/>
    <property type="protein sequence ID" value="ENSMUSP00000148417.2"/>
    <property type="gene ID" value="ENSMUSG00000036437.7"/>
</dbReference>
<dbReference type="GeneID" id="18166"/>
<dbReference type="KEGG" id="mmu:18166"/>
<dbReference type="UCSC" id="uc009lvt.2">
    <molecule id="Q04573-1"/>
    <property type="organism name" value="mouse"/>
</dbReference>
<dbReference type="AGR" id="MGI:104963"/>
<dbReference type="CTD" id="4886"/>
<dbReference type="MGI" id="MGI:104963">
    <property type="gene designation" value="Npy1r"/>
</dbReference>
<dbReference type="VEuPathDB" id="HostDB:ENSMUSG00000036437"/>
<dbReference type="eggNOG" id="KOG3656">
    <property type="taxonomic scope" value="Eukaryota"/>
</dbReference>
<dbReference type="GeneTree" id="ENSGT00940000160268"/>
<dbReference type="HOGENOM" id="CLU_009579_6_1_1"/>
<dbReference type="InParanoid" id="Q04573"/>
<dbReference type="OMA" id="QFFFHFC"/>
<dbReference type="OrthoDB" id="9046662at2759"/>
<dbReference type="PhylomeDB" id="Q04573"/>
<dbReference type="TreeFam" id="TF315303"/>
<dbReference type="Reactome" id="R-MMU-375276">
    <property type="pathway name" value="Peptide ligand-binding receptors"/>
</dbReference>
<dbReference type="Reactome" id="R-MMU-418594">
    <property type="pathway name" value="G alpha (i) signalling events"/>
</dbReference>
<dbReference type="BioGRID-ORCS" id="18166">
    <property type="hits" value="3 hits in 76 CRISPR screens"/>
</dbReference>
<dbReference type="ChiTaRS" id="Npy1r">
    <property type="organism name" value="mouse"/>
</dbReference>
<dbReference type="PRO" id="PR:Q04573"/>
<dbReference type="Proteomes" id="UP000000589">
    <property type="component" value="Chromosome 8"/>
</dbReference>
<dbReference type="RNAct" id="Q04573">
    <property type="molecule type" value="protein"/>
</dbReference>
<dbReference type="Bgee" id="ENSMUSG00000036437">
    <property type="expression patterns" value="Expressed in ascending aorta and 107 other cell types or tissues"/>
</dbReference>
<dbReference type="ExpressionAtlas" id="Q04573">
    <property type="expression patterns" value="baseline and differential"/>
</dbReference>
<dbReference type="GO" id="GO:0005886">
    <property type="term" value="C:plasma membrane"/>
    <property type="evidence" value="ECO:0007669"/>
    <property type="project" value="UniProtKB-SubCell"/>
</dbReference>
<dbReference type="GO" id="GO:0004983">
    <property type="term" value="F:neuropeptide Y receptor activity"/>
    <property type="evidence" value="ECO:0000314"/>
    <property type="project" value="MGI"/>
</dbReference>
<dbReference type="GO" id="GO:0001602">
    <property type="term" value="F:pancreatic polypeptide receptor activity"/>
    <property type="evidence" value="ECO:0000314"/>
    <property type="project" value="MGI"/>
</dbReference>
<dbReference type="GO" id="GO:0001601">
    <property type="term" value="F:peptide YY receptor activity"/>
    <property type="evidence" value="ECO:0000314"/>
    <property type="project" value="MGI"/>
</dbReference>
<dbReference type="GO" id="GO:0007631">
    <property type="term" value="P:feeding behavior"/>
    <property type="evidence" value="ECO:0000315"/>
    <property type="project" value="MGI"/>
</dbReference>
<dbReference type="GO" id="GO:0006006">
    <property type="term" value="P:glucose metabolic process"/>
    <property type="evidence" value="ECO:0000315"/>
    <property type="project" value="MGI"/>
</dbReference>
<dbReference type="GO" id="GO:0007626">
    <property type="term" value="P:locomotory behavior"/>
    <property type="evidence" value="ECO:0000315"/>
    <property type="project" value="MGI"/>
</dbReference>
<dbReference type="GO" id="GO:0003151">
    <property type="term" value="P:outflow tract morphogenesis"/>
    <property type="evidence" value="ECO:0007669"/>
    <property type="project" value="Ensembl"/>
</dbReference>
<dbReference type="GO" id="GO:0008217">
    <property type="term" value="P:regulation of blood pressure"/>
    <property type="evidence" value="ECO:0000315"/>
    <property type="project" value="MGI"/>
</dbReference>
<dbReference type="GO" id="GO:0040014">
    <property type="term" value="P:regulation of multicellular organism growth"/>
    <property type="evidence" value="ECO:0000315"/>
    <property type="project" value="MGI"/>
</dbReference>
<dbReference type="GO" id="GO:0019233">
    <property type="term" value="P:sensory perception of pain"/>
    <property type="evidence" value="ECO:0000315"/>
    <property type="project" value="MGI"/>
</dbReference>
<dbReference type="CDD" id="cd15395">
    <property type="entry name" value="7tmA_NPY1R"/>
    <property type="match status" value="1"/>
</dbReference>
<dbReference type="FunFam" id="1.20.1070.10:FF:000062">
    <property type="entry name" value="Neuropeptide Y receptor type 1"/>
    <property type="match status" value="1"/>
</dbReference>
<dbReference type="Gene3D" id="1.20.1070.10">
    <property type="entry name" value="Rhodopsin 7-helix transmembrane proteins"/>
    <property type="match status" value="1"/>
</dbReference>
<dbReference type="InterPro" id="IPR000276">
    <property type="entry name" value="GPCR_Rhodpsn"/>
</dbReference>
<dbReference type="InterPro" id="IPR017452">
    <property type="entry name" value="GPCR_Rhodpsn_7TM"/>
</dbReference>
<dbReference type="InterPro" id="IPR000351">
    <property type="entry name" value="NPY1_rcpt"/>
</dbReference>
<dbReference type="InterPro" id="IPR000611">
    <property type="entry name" value="NPY_rcpt"/>
</dbReference>
<dbReference type="PANTHER" id="PTHR24235">
    <property type="entry name" value="NEUROPEPTIDE Y RECEPTOR"/>
    <property type="match status" value="1"/>
</dbReference>
<dbReference type="PANTHER" id="PTHR24235:SF24">
    <property type="entry name" value="NEUROPEPTIDE Y RECEPTOR TYPE 1"/>
    <property type="match status" value="1"/>
</dbReference>
<dbReference type="Pfam" id="PF00001">
    <property type="entry name" value="7tm_1"/>
    <property type="match status" value="1"/>
</dbReference>
<dbReference type="PRINTS" id="PR00237">
    <property type="entry name" value="GPCRRHODOPSN"/>
</dbReference>
<dbReference type="PRINTS" id="PR01013">
    <property type="entry name" value="NRPEPTIDEY1R"/>
</dbReference>
<dbReference type="PRINTS" id="PR01012">
    <property type="entry name" value="NRPEPTIDEYR"/>
</dbReference>
<dbReference type="SUPFAM" id="SSF81321">
    <property type="entry name" value="Family A G protein-coupled receptor-like"/>
    <property type="match status" value="1"/>
</dbReference>
<dbReference type="PROSITE" id="PS00237">
    <property type="entry name" value="G_PROTEIN_RECEP_F1_1"/>
    <property type="match status" value="1"/>
</dbReference>
<dbReference type="PROSITE" id="PS50262">
    <property type="entry name" value="G_PROTEIN_RECEP_F1_2"/>
    <property type="match status" value="1"/>
</dbReference>
<organism>
    <name type="scientific">Mus musculus</name>
    <name type="common">Mouse</name>
    <dbReference type="NCBI Taxonomy" id="10090"/>
    <lineage>
        <taxon>Eukaryota</taxon>
        <taxon>Metazoa</taxon>
        <taxon>Chordata</taxon>
        <taxon>Craniata</taxon>
        <taxon>Vertebrata</taxon>
        <taxon>Euteleostomi</taxon>
        <taxon>Mammalia</taxon>
        <taxon>Eutheria</taxon>
        <taxon>Euarchontoglires</taxon>
        <taxon>Glires</taxon>
        <taxon>Rodentia</taxon>
        <taxon>Myomorpha</taxon>
        <taxon>Muroidea</taxon>
        <taxon>Muridae</taxon>
        <taxon>Murinae</taxon>
        <taxon>Mus</taxon>
        <taxon>Mus</taxon>
    </lineage>
</organism>
<comment type="function">
    <text>Receptor for neuropeptide Y and peptide YY.</text>
</comment>
<comment type="subcellular location">
    <subcellularLocation>
        <location>Cell membrane</location>
        <topology>Multi-pass membrane protein</topology>
    </subcellularLocation>
</comment>
<comment type="alternative products">
    <event type="alternative splicing"/>
    <isoform>
        <id>Q04573-1</id>
        <name>NPY1-R alpha</name>
        <sequence type="displayed"/>
    </isoform>
    <isoform>
        <id>Q04573-2</id>
        <name>NPY1-R beta</name>
        <sequence type="described" ref="VSP_001912 VSP_001913"/>
    </isoform>
</comment>
<comment type="tissue specificity">
    <text>The alpha form is highly expressed in the brain, heart, kidney, spleen, skeletal muscle, and lung, whereas the beta receptor mRNA was not detected in these tissues. However, the beta form is expressed in mouse embryonic developmental stage (7 and 11 days), bone marrow cells and several hematopoietic cell lines.</text>
</comment>
<comment type="developmental stage">
    <text>The beta form is expressed in embryonic developmental stage (7 and 11 days). The beta form is an embryonic and a bone marrow form of NPY1-R, which decreases in the expression during development and differentiation.</text>
</comment>
<comment type="similarity">
    <text evidence="4">Belongs to the G-protein coupled receptor 1 family.</text>
</comment>
<keyword id="KW-0025">Alternative splicing</keyword>
<keyword id="KW-1003">Cell membrane</keyword>
<keyword id="KW-1015">Disulfide bond</keyword>
<keyword id="KW-0297">G-protein coupled receptor</keyword>
<keyword id="KW-0325">Glycoprotein</keyword>
<keyword id="KW-0449">Lipoprotein</keyword>
<keyword id="KW-0472">Membrane</keyword>
<keyword id="KW-0564">Palmitate</keyword>
<keyword id="KW-0597">Phosphoprotein</keyword>
<keyword id="KW-0675">Receptor</keyword>
<keyword id="KW-1185">Reference proteome</keyword>
<keyword id="KW-0807">Transducer</keyword>
<keyword id="KW-0812">Transmembrane</keyword>
<keyword id="KW-1133">Transmembrane helix</keyword>
<protein>
    <recommendedName>
        <fullName>Neuropeptide Y receptor type 1</fullName>
        <shortName>NPY1-R</shortName>
    </recommendedName>
</protein>
<proteinExistence type="evidence at protein level"/>
<feature type="chain" id="PRO_0000069921" description="Neuropeptide Y receptor type 1">
    <location>
        <begin position="1"/>
        <end position="382"/>
    </location>
</feature>
<feature type="topological domain" description="Extracellular" evidence="3">
    <location>
        <begin position="1"/>
        <end position="33"/>
    </location>
</feature>
<feature type="transmembrane region" description="Helical; Name=1" evidence="3">
    <location>
        <begin position="34"/>
        <end position="54"/>
    </location>
</feature>
<feature type="topological domain" description="Cytoplasmic" evidence="3">
    <location>
        <begin position="55"/>
        <end position="75"/>
    </location>
</feature>
<feature type="transmembrane region" description="Helical; Name=2" evidence="3">
    <location>
        <begin position="76"/>
        <end position="96"/>
    </location>
</feature>
<feature type="topological domain" description="Extracellular" evidence="3">
    <location>
        <begin position="97"/>
        <end position="115"/>
    </location>
</feature>
<feature type="transmembrane region" description="Helical; Name=3" evidence="3">
    <location>
        <begin position="116"/>
        <end position="136"/>
    </location>
</feature>
<feature type="topological domain" description="Cytoplasmic" evidence="3">
    <location>
        <begin position="137"/>
        <end position="153"/>
    </location>
</feature>
<feature type="transmembrane region" description="Helical; Name=4" evidence="3">
    <location>
        <begin position="154"/>
        <end position="174"/>
    </location>
</feature>
<feature type="topological domain" description="Extracellular" evidence="3">
    <location>
        <begin position="175"/>
        <end position="210"/>
    </location>
</feature>
<feature type="transmembrane region" description="Helical; Name=5" evidence="3">
    <location>
        <begin position="211"/>
        <end position="231"/>
    </location>
</feature>
<feature type="topological domain" description="Cytoplasmic" evidence="3">
    <location>
        <begin position="232"/>
        <end position="259"/>
    </location>
</feature>
<feature type="transmembrane region" description="Helical; Name=6" evidence="3">
    <location>
        <begin position="260"/>
        <end position="280"/>
    </location>
</feature>
<feature type="topological domain" description="Extracellular" evidence="3">
    <location>
        <begin position="281"/>
        <end position="298"/>
    </location>
</feature>
<feature type="transmembrane region" description="Helical; Name=7" evidence="3">
    <location>
        <begin position="299"/>
        <end position="319"/>
    </location>
</feature>
<feature type="topological domain" description="Cytoplasmic" evidence="3">
    <location>
        <begin position="320"/>
        <end position="382"/>
    </location>
</feature>
<feature type="modified residue" description="Phosphoserine" evidence="2">
    <location>
        <position position="367"/>
    </location>
</feature>
<feature type="modified residue" description="Phosphoserine" evidence="6">
    <location>
        <position position="375"/>
    </location>
</feature>
<feature type="lipid moiety-binding region" description="S-palmitoyl cysteine" evidence="1">
    <location>
        <position position="337"/>
    </location>
</feature>
<feature type="glycosylation site" description="N-linked (GlcNAc...) asparagine" evidence="3">
    <location>
        <position position="2"/>
    </location>
</feature>
<feature type="glycosylation site" description="N-linked (GlcNAc...) asparagine" evidence="3">
    <location>
        <position position="11"/>
    </location>
</feature>
<feature type="glycosylation site" description="N-linked (GlcNAc...) asparagine" evidence="3">
    <location>
        <position position="17"/>
    </location>
</feature>
<feature type="disulfide bond" evidence="4">
    <location>
        <begin position="112"/>
        <end position="197"/>
    </location>
</feature>
<feature type="splice variant" id="VSP_001912" description="In isoform NPY1-R beta." evidence="5">
    <original>CHLT</original>
    <variation>LNMN</variation>
    <location>
        <begin position="304"/>
        <end position="307"/>
    </location>
</feature>
<feature type="splice variant" id="VSP_001913" description="In isoform NPY1-R beta." evidence="5">
    <location>
        <begin position="308"/>
        <end position="382"/>
    </location>
</feature>
<sequence>MNSTLFSKVENHSIHYNASENSPLLAFENDDCHLPLAVIFTLALAYGAVIILGVSGNLALIIIILKQKEMRNVTNILIVNLSFSDLLVAVMCLPFTFVYTLMDHWVFGETMCKLNPFVQCVSITVSIFSLVLIAVERHQLIINPRGWRPNNRHAYIGITVIWVLAVASSLPFVIYQILTDEPFQNVSLAAFKDKYVCFDKFPSDSHRLSYTTLLLVLQYFGPLCFIFICYFKIYIRLKRRNNMMDKIRDSKYRSSETKRINIMLLSIVVAFAVCWLPLTIFNTVFDWNHQIIATCNHNLLFLLCHLTAMISTCVNPIFYGFLNKNFQRDLQFFFNFCDFRSRDDDYETIAMSTMHTDVSKTSLKQASPVAFKKISMNDNEKV</sequence>
<reference key="1">
    <citation type="journal article" date="1992" name="FEBS Lett.">
        <title>The murine NPY-1 receptor gene. Structure and delineation of tissue-specific expression.</title>
        <authorList>
            <person name="Eva C."/>
            <person name="Oberto A."/>
            <person name="Sprengel R."/>
            <person name="Genazzani E."/>
        </authorList>
    </citation>
    <scope>NUCLEOTIDE SEQUENCE [GENOMIC DNA]</scope>
    <source>
        <tissue>Liver</tissue>
    </source>
</reference>
<reference key="2">
    <citation type="journal article" date="1995" name="J. Biol. Chem.">
        <title>Identification of two isoforms of mouse neuropeptide Y-Y1 receptor generated by alternative splicing. Isolation, genomic structure, and functional expression of the receptors.</title>
        <authorList>
            <person name="Nakamura M."/>
            <person name="Sakanaka C."/>
            <person name="Aoki Y."/>
            <person name="Ogasawara H."/>
            <person name="Tsuji T."/>
            <person name="Kodama H."/>
            <person name="Matsumoto T."/>
            <person name="Shimizu T."/>
            <person name="Noma M."/>
        </authorList>
    </citation>
    <scope>NUCLEOTIDE SEQUENCE [MRNA]</scope>
</reference>
<reference key="3">
    <citation type="journal article" date="2004" name="Genome Res.">
        <title>The status, quality, and expansion of the NIH full-length cDNA project: the Mammalian Gene Collection (MGC).</title>
        <authorList>
            <consortium name="The MGC Project Team"/>
        </authorList>
    </citation>
    <scope>NUCLEOTIDE SEQUENCE [LARGE SCALE MRNA] (ISOFORM NPY1-R ALPHA)</scope>
    <source>
        <tissue>Eye</tissue>
    </source>
</reference>
<reference key="4">
    <citation type="journal article" date="2010" name="Cell">
        <title>A tissue-specific atlas of mouse protein phosphorylation and expression.</title>
        <authorList>
            <person name="Huttlin E.L."/>
            <person name="Jedrychowski M.P."/>
            <person name="Elias J.E."/>
            <person name="Goswami T."/>
            <person name="Rad R."/>
            <person name="Beausoleil S.A."/>
            <person name="Villen J."/>
            <person name="Haas W."/>
            <person name="Sowa M.E."/>
            <person name="Gygi S.P."/>
        </authorList>
    </citation>
    <scope>PHOSPHORYLATION [LARGE SCALE ANALYSIS] AT SER-375</scope>
    <scope>IDENTIFICATION BY MASS SPECTROMETRY [LARGE SCALE ANALYSIS]</scope>
    <source>
        <tissue>Kidney</tissue>
    </source>
</reference>
<gene>
    <name type="primary">Npy1r</name>
</gene>
<evidence type="ECO:0000250" key="1"/>
<evidence type="ECO:0000250" key="2">
    <source>
        <dbReference type="UniProtKB" id="P21555"/>
    </source>
</evidence>
<evidence type="ECO:0000255" key="3"/>
<evidence type="ECO:0000255" key="4">
    <source>
        <dbReference type="PROSITE-ProRule" id="PRU00521"/>
    </source>
</evidence>
<evidence type="ECO:0000305" key="5"/>
<evidence type="ECO:0007744" key="6">
    <source>
    </source>
</evidence>